<dbReference type="EC" id="5.4.2.7" evidence="1"/>
<dbReference type="EMBL" id="BX571860">
    <property type="protein sequence ID" value="CAE12816.1"/>
    <property type="molecule type" value="Genomic_DNA"/>
</dbReference>
<dbReference type="RefSeq" id="WP_011144905.1">
    <property type="nucleotide sequence ID" value="NC_005126.1"/>
</dbReference>
<dbReference type="SMR" id="Q7N931"/>
<dbReference type="STRING" id="243265.plu0521"/>
<dbReference type="GeneID" id="48846810"/>
<dbReference type="KEGG" id="plu:plu0521"/>
<dbReference type="eggNOG" id="COG1015">
    <property type="taxonomic scope" value="Bacteria"/>
</dbReference>
<dbReference type="HOGENOM" id="CLU_053861_0_0_6"/>
<dbReference type="OrthoDB" id="9769930at2"/>
<dbReference type="UniPathway" id="UPA00002">
    <property type="reaction ID" value="UER00467"/>
</dbReference>
<dbReference type="Proteomes" id="UP000002514">
    <property type="component" value="Chromosome"/>
</dbReference>
<dbReference type="GO" id="GO:0005829">
    <property type="term" value="C:cytosol"/>
    <property type="evidence" value="ECO:0007669"/>
    <property type="project" value="TreeGrafter"/>
</dbReference>
<dbReference type="GO" id="GO:0000287">
    <property type="term" value="F:magnesium ion binding"/>
    <property type="evidence" value="ECO:0007669"/>
    <property type="project" value="InterPro"/>
</dbReference>
<dbReference type="GO" id="GO:0030145">
    <property type="term" value="F:manganese ion binding"/>
    <property type="evidence" value="ECO:0007669"/>
    <property type="project" value="UniProtKB-UniRule"/>
</dbReference>
<dbReference type="GO" id="GO:0008973">
    <property type="term" value="F:phosphopentomutase activity"/>
    <property type="evidence" value="ECO:0007669"/>
    <property type="project" value="UniProtKB-UniRule"/>
</dbReference>
<dbReference type="GO" id="GO:0006018">
    <property type="term" value="P:2-deoxyribose 1-phosphate catabolic process"/>
    <property type="evidence" value="ECO:0007669"/>
    <property type="project" value="UniProtKB-UniRule"/>
</dbReference>
<dbReference type="GO" id="GO:0006015">
    <property type="term" value="P:5-phosphoribose 1-diphosphate biosynthetic process"/>
    <property type="evidence" value="ECO:0007669"/>
    <property type="project" value="UniProtKB-UniPathway"/>
</dbReference>
<dbReference type="GO" id="GO:0043094">
    <property type="term" value="P:metabolic compound salvage"/>
    <property type="evidence" value="ECO:0007669"/>
    <property type="project" value="InterPro"/>
</dbReference>
<dbReference type="GO" id="GO:0009117">
    <property type="term" value="P:nucleotide metabolic process"/>
    <property type="evidence" value="ECO:0007669"/>
    <property type="project" value="InterPro"/>
</dbReference>
<dbReference type="CDD" id="cd16009">
    <property type="entry name" value="PPM"/>
    <property type="match status" value="1"/>
</dbReference>
<dbReference type="FunFam" id="3.30.70.1250:FF:000001">
    <property type="entry name" value="Phosphopentomutase"/>
    <property type="match status" value="1"/>
</dbReference>
<dbReference type="Gene3D" id="3.40.720.10">
    <property type="entry name" value="Alkaline Phosphatase, subunit A"/>
    <property type="match status" value="1"/>
</dbReference>
<dbReference type="Gene3D" id="3.30.70.1250">
    <property type="entry name" value="Phosphopentomutase"/>
    <property type="match status" value="1"/>
</dbReference>
<dbReference type="HAMAP" id="MF_00740">
    <property type="entry name" value="Phosphopentomut"/>
    <property type="match status" value="1"/>
</dbReference>
<dbReference type="InterPro" id="IPR017850">
    <property type="entry name" value="Alkaline_phosphatase_core_sf"/>
</dbReference>
<dbReference type="InterPro" id="IPR010045">
    <property type="entry name" value="DeoB"/>
</dbReference>
<dbReference type="InterPro" id="IPR006124">
    <property type="entry name" value="Metalloenzyme"/>
</dbReference>
<dbReference type="InterPro" id="IPR024052">
    <property type="entry name" value="Phosphopentomutase_DeoB_cap_sf"/>
</dbReference>
<dbReference type="NCBIfam" id="TIGR01696">
    <property type="entry name" value="deoB"/>
    <property type="match status" value="1"/>
</dbReference>
<dbReference type="NCBIfam" id="NF003766">
    <property type="entry name" value="PRK05362.1"/>
    <property type="match status" value="1"/>
</dbReference>
<dbReference type="PANTHER" id="PTHR21110">
    <property type="entry name" value="PHOSPHOPENTOMUTASE"/>
    <property type="match status" value="1"/>
</dbReference>
<dbReference type="PANTHER" id="PTHR21110:SF0">
    <property type="entry name" value="PHOSPHOPENTOMUTASE"/>
    <property type="match status" value="1"/>
</dbReference>
<dbReference type="Pfam" id="PF01676">
    <property type="entry name" value="Metalloenzyme"/>
    <property type="match status" value="1"/>
</dbReference>
<dbReference type="PIRSF" id="PIRSF001491">
    <property type="entry name" value="Ppentomutase"/>
    <property type="match status" value="1"/>
</dbReference>
<dbReference type="SUPFAM" id="SSF53649">
    <property type="entry name" value="Alkaline phosphatase-like"/>
    <property type="match status" value="1"/>
</dbReference>
<dbReference type="SUPFAM" id="SSF143856">
    <property type="entry name" value="DeoB insert domain-like"/>
    <property type="match status" value="1"/>
</dbReference>
<gene>
    <name evidence="1" type="primary">deoB</name>
    <name type="ordered locus">plu0521</name>
</gene>
<name>DEOB_PHOLL</name>
<accession>Q7N931</accession>
<organism>
    <name type="scientific">Photorhabdus laumondii subsp. laumondii (strain DSM 15139 / CIP 105565 / TT01)</name>
    <name type="common">Photorhabdus luminescens subsp. laumondii</name>
    <dbReference type="NCBI Taxonomy" id="243265"/>
    <lineage>
        <taxon>Bacteria</taxon>
        <taxon>Pseudomonadati</taxon>
        <taxon>Pseudomonadota</taxon>
        <taxon>Gammaproteobacteria</taxon>
        <taxon>Enterobacterales</taxon>
        <taxon>Morganellaceae</taxon>
        <taxon>Photorhabdus</taxon>
    </lineage>
</organism>
<feature type="chain" id="PRO_0000199832" description="Phosphopentomutase">
    <location>
        <begin position="1"/>
        <end position="407"/>
    </location>
</feature>
<feature type="binding site" evidence="1">
    <location>
        <position position="10"/>
    </location>
    <ligand>
        <name>Mn(2+)</name>
        <dbReference type="ChEBI" id="CHEBI:29035"/>
        <label>1</label>
    </ligand>
</feature>
<feature type="binding site" evidence="1">
    <location>
        <position position="306"/>
    </location>
    <ligand>
        <name>Mn(2+)</name>
        <dbReference type="ChEBI" id="CHEBI:29035"/>
        <label>2</label>
    </ligand>
</feature>
<feature type="binding site" evidence="1">
    <location>
        <position position="311"/>
    </location>
    <ligand>
        <name>Mn(2+)</name>
        <dbReference type="ChEBI" id="CHEBI:29035"/>
        <label>2</label>
    </ligand>
</feature>
<feature type="binding site" evidence="1">
    <location>
        <position position="347"/>
    </location>
    <ligand>
        <name>Mn(2+)</name>
        <dbReference type="ChEBI" id="CHEBI:29035"/>
        <label>1</label>
    </ligand>
</feature>
<feature type="binding site" evidence="1">
    <location>
        <position position="348"/>
    </location>
    <ligand>
        <name>Mn(2+)</name>
        <dbReference type="ChEBI" id="CHEBI:29035"/>
        <label>1</label>
    </ligand>
</feature>
<feature type="binding site" evidence="1">
    <location>
        <position position="359"/>
    </location>
    <ligand>
        <name>Mn(2+)</name>
        <dbReference type="ChEBI" id="CHEBI:29035"/>
        <label>2</label>
    </ligand>
</feature>
<proteinExistence type="inferred from homology"/>
<sequence length="407" mass="44465">MKRTFIMVLDSFGIGASKDAEKFGDQGSNTLGHIAEACARGDADIGRKGPLYLPNLSRLGLGKATEESCGTFPAGLDKDADIIGAYAYASELSSGKDTPSGHWEIAGVPVLFDWGYFKDEENSFPQALLDKLVERANLPGYLGNCHSSGTVILDKLGEEHMKTGKPIFYTSADSVFQIACHEETFGLDRLYELCEIAREELTDGGYNIGRVIARPFVGDKAGNFQRTGNRHDLAVEPPAPTILKKLVDEKNGEVVSIGKIADIYANVGITQKVKATGIDALFDATLVEMEKAGDNTIVFTNFVDFDSSYGHRRDVPGYAAALELFDRRLPEMLKRVKNDDILILTADHGCDPTWSGTDHTREHIPVLIYGPKVQPGSLGHRETFADIGQTVAKYFELSPMEYGKSML</sequence>
<keyword id="KW-0963">Cytoplasm</keyword>
<keyword id="KW-0413">Isomerase</keyword>
<keyword id="KW-0464">Manganese</keyword>
<keyword id="KW-0479">Metal-binding</keyword>
<keyword id="KW-1185">Reference proteome</keyword>
<evidence type="ECO:0000255" key="1">
    <source>
        <dbReference type="HAMAP-Rule" id="MF_00740"/>
    </source>
</evidence>
<reference key="1">
    <citation type="journal article" date="2003" name="Nat. Biotechnol.">
        <title>The genome sequence of the entomopathogenic bacterium Photorhabdus luminescens.</title>
        <authorList>
            <person name="Duchaud E."/>
            <person name="Rusniok C."/>
            <person name="Frangeul L."/>
            <person name="Buchrieser C."/>
            <person name="Givaudan A."/>
            <person name="Taourit S."/>
            <person name="Bocs S."/>
            <person name="Boursaux-Eude C."/>
            <person name="Chandler M."/>
            <person name="Charles J.-F."/>
            <person name="Dassa E."/>
            <person name="Derose R."/>
            <person name="Derzelle S."/>
            <person name="Freyssinet G."/>
            <person name="Gaudriault S."/>
            <person name="Medigue C."/>
            <person name="Lanois A."/>
            <person name="Powell K."/>
            <person name="Siguier P."/>
            <person name="Vincent R."/>
            <person name="Wingate V."/>
            <person name="Zouine M."/>
            <person name="Glaser P."/>
            <person name="Boemare N."/>
            <person name="Danchin A."/>
            <person name="Kunst F."/>
        </authorList>
    </citation>
    <scope>NUCLEOTIDE SEQUENCE [LARGE SCALE GENOMIC DNA]</scope>
    <source>
        <strain>DSM 15139 / CIP 105565 / TT01</strain>
    </source>
</reference>
<comment type="function">
    <text evidence="1">Isomerase that catalyzes the conversion of deoxy-ribose 1-phosphate (dRib-1-P) and ribose 1-phosphate (Rib-1-P) to deoxy-ribose 5-phosphate (dRib-5-P) and ribose 5-phosphate (Rib-5-P), respectively.</text>
</comment>
<comment type="catalytic activity">
    <reaction evidence="1">
        <text>2-deoxy-alpha-D-ribose 1-phosphate = 2-deoxy-D-ribose 5-phosphate</text>
        <dbReference type="Rhea" id="RHEA:27658"/>
        <dbReference type="ChEBI" id="CHEBI:57259"/>
        <dbReference type="ChEBI" id="CHEBI:62877"/>
        <dbReference type="EC" id="5.4.2.7"/>
    </reaction>
</comment>
<comment type="catalytic activity">
    <reaction evidence="1">
        <text>alpha-D-ribose 1-phosphate = D-ribose 5-phosphate</text>
        <dbReference type="Rhea" id="RHEA:18793"/>
        <dbReference type="ChEBI" id="CHEBI:57720"/>
        <dbReference type="ChEBI" id="CHEBI:78346"/>
        <dbReference type="EC" id="5.4.2.7"/>
    </reaction>
</comment>
<comment type="cofactor">
    <cofactor evidence="1">
        <name>Mn(2+)</name>
        <dbReference type="ChEBI" id="CHEBI:29035"/>
    </cofactor>
    <text evidence="1">Binds 2 manganese ions.</text>
</comment>
<comment type="pathway">
    <text evidence="1">Carbohydrate degradation; 2-deoxy-D-ribose 1-phosphate degradation; D-glyceraldehyde 3-phosphate and acetaldehyde from 2-deoxy-alpha-D-ribose 1-phosphate: step 1/2.</text>
</comment>
<comment type="subcellular location">
    <subcellularLocation>
        <location evidence="1">Cytoplasm</location>
    </subcellularLocation>
</comment>
<comment type="similarity">
    <text evidence="1">Belongs to the phosphopentomutase family.</text>
</comment>
<protein>
    <recommendedName>
        <fullName evidence="1">Phosphopentomutase</fullName>
        <ecNumber evidence="1">5.4.2.7</ecNumber>
    </recommendedName>
    <alternativeName>
        <fullName evidence="1">Phosphodeoxyribomutase</fullName>
    </alternativeName>
</protein>